<keyword id="KW-0240">DNA-directed RNA polymerase</keyword>
<keyword id="KW-0548">Nucleotidyltransferase</keyword>
<keyword id="KW-1185">Reference proteome</keyword>
<keyword id="KW-0804">Transcription</keyword>
<keyword id="KW-0808">Transferase</keyword>
<comment type="function">
    <text evidence="1">DNA-dependent RNA polymerase catalyzes the transcription of DNA into RNA using the four ribonucleoside triphosphates as substrates.</text>
</comment>
<comment type="catalytic activity">
    <reaction evidence="1">
        <text>RNA(n) + a ribonucleoside 5'-triphosphate = RNA(n+1) + diphosphate</text>
        <dbReference type="Rhea" id="RHEA:21248"/>
        <dbReference type="Rhea" id="RHEA-COMP:14527"/>
        <dbReference type="Rhea" id="RHEA-COMP:17342"/>
        <dbReference type="ChEBI" id="CHEBI:33019"/>
        <dbReference type="ChEBI" id="CHEBI:61557"/>
        <dbReference type="ChEBI" id="CHEBI:140395"/>
        <dbReference type="EC" id="2.7.7.6"/>
    </reaction>
</comment>
<comment type="subunit">
    <text evidence="1">Homodimer. The RNAP catalytic core consists of 2 alpha, 1 beta, 1 beta' and 1 omega subunit. When a sigma factor is associated with the core the holoenzyme is formed, which can initiate transcription.</text>
</comment>
<comment type="domain">
    <text evidence="1">The N-terminal domain is essential for RNAP assembly and basal transcription, whereas the C-terminal domain is involved in interaction with transcriptional regulators and with upstream promoter elements.</text>
</comment>
<comment type="similarity">
    <text evidence="1">Belongs to the RNA polymerase alpha chain family.</text>
</comment>
<sequence length="347" mass="37704">MLISQRPTLSEEVLTDNRSQFVIEPLEPGFGYTLGNSLRRTLLSSIPGAAVTSIRIDGVLHEFTTVPGVKEDVTAIILNLKSLVVSSEEDEPVTMYLRKQGPGEVTAGDIVPPAGVTVHNPELHIATLNDKGKLEVELVVERGRGYVPAVQNRASGAEIGRIPVDSIYSPVLKVTYKVDATRVEQRTDFDKLILDVETKSSITPRDALASAGKTLVELFGLARELNVEAEGIEIGPSPAEADHIASFALPIDDLDLTVRSYNCLKREGVHTVGELVSRTESDLLDIRNFGQKSIDEVKVKLHQLGLSLKDSPPSFDPSQVAGYDVATGTWSTEAAYDDQDYAETEQL</sequence>
<reference key="1">
    <citation type="journal article" date="2005" name="Proc. Natl. Acad. Sci. U.S.A.">
        <title>The complete genome sequence of Mycobacterium avium subspecies paratuberculosis.</title>
        <authorList>
            <person name="Li L."/>
            <person name="Bannantine J.P."/>
            <person name="Zhang Q."/>
            <person name="Amonsin A."/>
            <person name="May B.J."/>
            <person name="Alt D."/>
            <person name="Banerji N."/>
            <person name="Kanjilal S."/>
            <person name="Kapur V."/>
        </authorList>
    </citation>
    <scope>NUCLEOTIDE SEQUENCE [LARGE SCALE GENOMIC DNA]</scope>
    <source>
        <strain>ATCC BAA-968 / K-10</strain>
    </source>
</reference>
<gene>
    <name evidence="1" type="primary">rpoA</name>
    <name type="ordered locus">MAP_4233</name>
</gene>
<feature type="chain" id="PRO_0000175340" description="DNA-directed RNA polymerase subunit alpha">
    <location>
        <begin position="1"/>
        <end position="347"/>
    </location>
</feature>
<feature type="region of interest" description="Alpha N-terminal domain (alpha-NTD)" evidence="1">
    <location>
        <begin position="1"/>
        <end position="226"/>
    </location>
</feature>
<feature type="region of interest" description="Alpha C-terminal domain (alpha-CTD)" evidence="1">
    <location>
        <begin position="243"/>
        <end position="347"/>
    </location>
</feature>
<evidence type="ECO:0000255" key="1">
    <source>
        <dbReference type="HAMAP-Rule" id="MF_00059"/>
    </source>
</evidence>
<accession>Q73S43</accession>
<protein>
    <recommendedName>
        <fullName evidence="1">DNA-directed RNA polymerase subunit alpha</fullName>
        <shortName evidence="1">RNAP subunit alpha</shortName>
        <ecNumber evidence="1">2.7.7.6</ecNumber>
    </recommendedName>
    <alternativeName>
        <fullName evidence="1">RNA polymerase subunit alpha</fullName>
    </alternativeName>
    <alternativeName>
        <fullName evidence="1">Transcriptase subunit alpha</fullName>
    </alternativeName>
</protein>
<proteinExistence type="inferred from homology"/>
<dbReference type="EC" id="2.7.7.6" evidence="1"/>
<dbReference type="EMBL" id="AE016958">
    <property type="protein sequence ID" value="AAS06783.1"/>
    <property type="molecule type" value="Genomic_DNA"/>
</dbReference>
<dbReference type="RefSeq" id="WP_003873443.1">
    <property type="nucleotide sequence ID" value="NC_002944.2"/>
</dbReference>
<dbReference type="SMR" id="Q73S43"/>
<dbReference type="STRING" id="262316.MAP_4233"/>
<dbReference type="KEGG" id="mpa:MAP_4233"/>
<dbReference type="eggNOG" id="COG0202">
    <property type="taxonomic scope" value="Bacteria"/>
</dbReference>
<dbReference type="HOGENOM" id="CLU_053084_0_1_11"/>
<dbReference type="Proteomes" id="UP000000580">
    <property type="component" value="Chromosome"/>
</dbReference>
<dbReference type="GO" id="GO:0005737">
    <property type="term" value="C:cytoplasm"/>
    <property type="evidence" value="ECO:0007669"/>
    <property type="project" value="UniProtKB-ARBA"/>
</dbReference>
<dbReference type="GO" id="GO:0000428">
    <property type="term" value="C:DNA-directed RNA polymerase complex"/>
    <property type="evidence" value="ECO:0007669"/>
    <property type="project" value="UniProtKB-KW"/>
</dbReference>
<dbReference type="GO" id="GO:0003677">
    <property type="term" value="F:DNA binding"/>
    <property type="evidence" value="ECO:0007669"/>
    <property type="project" value="UniProtKB-UniRule"/>
</dbReference>
<dbReference type="GO" id="GO:0003899">
    <property type="term" value="F:DNA-directed RNA polymerase activity"/>
    <property type="evidence" value="ECO:0007669"/>
    <property type="project" value="UniProtKB-UniRule"/>
</dbReference>
<dbReference type="GO" id="GO:0046983">
    <property type="term" value="F:protein dimerization activity"/>
    <property type="evidence" value="ECO:0007669"/>
    <property type="project" value="InterPro"/>
</dbReference>
<dbReference type="GO" id="GO:0006351">
    <property type="term" value="P:DNA-templated transcription"/>
    <property type="evidence" value="ECO:0007669"/>
    <property type="project" value="UniProtKB-UniRule"/>
</dbReference>
<dbReference type="CDD" id="cd06928">
    <property type="entry name" value="RNAP_alpha_NTD"/>
    <property type="match status" value="1"/>
</dbReference>
<dbReference type="FunFam" id="1.10.150.20:FF:000001">
    <property type="entry name" value="DNA-directed RNA polymerase subunit alpha"/>
    <property type="match status" value="1"/>
</dbReference>
<dbReference type="FunFam" id="2.170.120.12:FF:000001">
    <property type="entry name" value="DNA-directed RNA polymerase subunit alpha"/>
    <property type="match status" value="1"/>
</dbReference>
<dbReference type="Gene3D" id="1.10.150.20">
    <property type="entry name" value="5' to 3' exonuclease, C-terminal subdomain"/>
    <property type="match status" value="1"/>
</dbReference>
<dbReference type="Gene3D" id="2.170.120.12">
    <property type="entry name" value="DNA-directed RNA polymerase, insert domain"/>
    <property type="match status" value="1"/>
</dbReference>
<dbReference type="Gene3D" id="3.30.1360.10">
    <property type="entry name" value="RNA polymerase, RBP11-like subunit"/>
    <property type="match status" value="1"/>
</dbReference>
<dbReference type="HAMAP" id="MF_00059">
    <property type="entry name" value="RNApol_bact_RpoA"/>
    <property type="match status" value="1"/>
</dbReference>
<dbReference type="InterPro" id="IPR011262">
    <property type="entry name" value="DNA-dir_RNA_pol_insert"/>
</dbReference>
<dbReference type="InterPro" id="IPR011263">
    <property type="entry name" value="DNA-dir_RNA_pol_RpoA/D/Rpb3"/>
</dbReference>
<dbReference type="InterPro" id="IPR011773">
    <property type="entry name" value="DNA-dir_RpoA"/>
</dbReference>
<dbReference type="InterPro" id="IPR036603">
    <property type="entry name" value="RBP11-like"/>
</dbReference>
<dbReference type="InterPro" id="IPR011260">
    <property type="entry name" value="RNAP_asu_C"/>
</dbReference>
<dbReference type="InterPro" id="IPR036643">
    <property type="entry name" value="RNApol_insert_sf"/>
</dbReference>
<dbReference type="NCBIfam" id="NF003513">
    <property type="entry name" value="PRK05182.1-2"/>
    <property type="match status" value="1"/>
</dbReference>
<dbReference type="NCBIfam" id="NF003514">
    <property type="entry name" value="PRK05182.1-4"/>
    <property type="match status" value="1"/>
</dbReference>
<dbReference type="NCBIfam" id="NF003519">
    <property type="entry name" value="PRK05182.2-5"/>
    <property type="match status" value="1"/>
</dbReference>
<dbReference type="NCBIfam" id="TIGR02027">
    <property type="entry name" value="rpoA"/>
    <property type="match status" value="1"/>
</dbReference>
<dbReference type="Pfam" id="PF01000">
    <property type="entry name" value="RNA_pol_A_bac"/>
    <property type="match status" value="1"/>
</dbReference>
<dbReference type="Pfam" id="PF03118">
    <property type="entry name" value="RNA_pol_A_CTD"/>
    <property type="match status" value="1"/>
</dbReference>
<dbReference type="Pfam" id="PF01193">
    <property type="entry name" value="RNA_pol_L"/>
    <property type="match status" value="1"/>
</dbReference>
<dbReference type="SMART" id="SM00662">
    <property type="entry name" value="RPOLD"/>
    <property type="match status" value="1"/>
</dbReference>
<dbReference type="SUPFAM" id="SSF47789">
    <property type="entry name" value="C-terminal domain of RNA polymerase alpha subunit"/>
    <property type="match status" value="1"/>
</dbReference>
<dbReference type="SUPFAM" id="SSF56553">
    <property type="entry name" value="Insert subdomain of RNA polymerase alpha subunit"/>
    <property type="match status" value="1"/>
</dbReference>
<dbReference type="SUPFAM" id="SSF55257">
    <property type="entry name" value="RBP11-like subunits of RNA polymerase"/>
    <property type="match status" value="1"/>
</dbReference>
<name>RPOA_MYCPA</name>
<organism>
    <name type="scientific">Mycolicibacterium paratuberculosis (strain ATCC BAA-968 / K-10)</name>
    <name type="common">Mycobacterium paratuberculosis</name>
    <dbReference type="NCBI Taxonomy" id="262316"/>
    <lineage>
        <taxon>Bacteria</taxon>
        <taxon>Bacillati</taxon>
        <taxon>Actinomycetota</taxon>
        <taxon>Actinomycetes</taxon>
        <taxon>Mycobacteriales</taxon>
        <taxon>Mycobacteriaceae</taxon>
        <taxon>Mycobacterium</taxon>
        <taxon>Mycobacterium avium complex (MAC)</taxon>
    </lineage>
</organism>